<reference key="1">
    <citation type="journal article" date="1999" name="Mol. Microbiol.">
        <title>The expression of the trpD, trpC and trpBA genes of Streptomyces coelicolor A3(2) is regulated by growth rate and growth phase but not by feedback repression.</title>
        <authorList>
            <person name="Hu D.S.-J."/>
            <person name="Hood D.W."/>
            <person name="Heidstra R."/>
            <person name="Hodgson D.A."/>
        </authorList>
    </citation>
    <scope>NUCLEOTIDE SEQUENCE [GENOMIC DNA]</scope>
    <source>
        <strain>A3(2) / NRRL B-16638</strain>
    </source>
</reference>
<reference key="2">
    <citation type="journal article" date="2002" name="Nature">
        <title>Complete genome sequence of the model actinomycete Streptomyces coelicolor A3(2).</title>
        <authorList>
            <person name="Bentley S.D."/>
            <person name="Chater K.F."/>
            <person name="Cerdeno-Tarraga A.-M."/>
            <person name="Challis G.L."/>
            <person name="Thomson N.R."/>
            <person name="James K.D."/>
            <person name="Harris D.E."/>
            <person name="Quail M.A."/>
            <person name="Kieser H."/>
            <person name="Harper D."/>
            <person name="Bateman A."/>
            <person name="Brown S."/>
            <person name="Chandra G."/>
            <person name="Chen C.W."/>
            <person name="Collins M."/>
            <person name="Cronin A."/>
            <person name="Fraser A."/>
            <person name="Goble A."/>
            <person name="Hidalgo J."/>
            <person name="Hornsby T."/>
            <person name="Howarth S."/>
            <person name="Huang C.-H."/>
            <person name="Kieser T."/>
            <person name="Larke L."/>
            <person name="Murphy L.D."/>
            <person name="Oliver K."/>
            <person name="O'Neil S."/>
            <person name="Rabbinowitsch E."/>
            <person name="Rajandream M.A."/>
            <person name="Rutherford K.M."/>
            <person name="Rutter S."/>
            <person name="Seeger K."/>
            <person name="Saunders D."/>
            <person name="Sharp S."/>
            <person name="Squares R."/>
            <person name="Squares S."/>
            <person name="Taylor K."/>
            <person name="Warren T."/>
            <person name="Wietzorrek A."/>
            <person name="Woodward J.R."/>
            <person name="Barrell B.G."/>
            <person name="Parkhill J."/>
            <person name="Hopwood D.A."/>
        </authorList>
    </citation>
    <scope>NUCLEOTIDE SEQUENCE [LARGE SCALE GENOMIC DNA]</scope>
    <source>
        <strain>ATCC BAA-471 / A3(2) / M145</strain>
    </source>
</reference>
<keyword id="KW-0028">Amino-acid biosynthesis</keyword>
<keyword id="KW-0057">Aromatic amino acid biosynthesis</keyword>
<keyword id="KW-0456">Lyase</keyword>
<keyword id="KW-1185">Reference proteome</keyword>
<keyword id="KW-0822">Tryptophan biosynthesis</keyword>
<proteinExistence type="inferred from homology"/>
<protein>
    <recommendedName>
        <fullName evidence="1">Tryptophan synthase alpha chain</fullName>
        <ecNumber evidence="1">4.2.1.20</ecNumber>
    </recommendedName>
</protein>
<organism>
    <name type="scientific">Streptomyces coelicolor (strain ATCC BAA-471 / A3(2) / M145)</name>
    <dbReference type="NCBI Taxonomy" id="100226"/>
    <lineage>
        <taxon>Bacteria</taxon>
        <taxon>Bacillati</taxon>
        <taxon>Actinomycetota</taxon>
        <taxon>Actinomycetes</taxon>
        <taxon>Kitasatosporales</taxon>
        <taxon>Streptomycetaceae</taxon>
        <taxon>Streptomyces</taxon>
        <taxon>Streptomyces albidoflavus group</taxon>
    </lineage>
</organism>
<evidence type="ECO:0000255" key="1">
    <source>
        <dbReference type="HAMAP-Rule" id="MF_00131"/>
    </source>
</evidence>
<feature type="chain" id="PRO_0000098852" description="Tryptophan synthase alpha chain">
    <location>
        <begin position="1"/>
        <end position="271"/>
    </location>
</feature>
<feature type="active site" description="Proton acceptor" evidence="1">
    <location>
        <position position="53"/>
    </location>
</feature>
<feature type="active site" description="Proton acceptor" evidence="1">
    <location>
        <position position="64"/>
    </location>
</feature>
<sequence length="271" mass="27709">MSGNVQLLNDTLAAAKSEGRAALIAYLPAGFPTVTGGIEAVKAALDGGADVVEVGLPHSDPVLDGPVIQTADDIALRGGVRIADVMRTVREAHEATGKPILVMTYWNPIDRYGVERFTAELAEAGGAGCILPDLPVQESALWREHADKHGLATVFVVAPSSRDARLAEITAVGSGFVYAASLMGVTGTRASVGAQAEDLVRRTRATTDTPVCVGLGVSNAAQAAEVAGFADGVIVGSAFVKRMLDAPDDAAGLEGVRALAADLAKGVRGQA</sequence>
<gene>
    <name evidence="1" type="primary">trpA</name>
    <name type="ordered locus">SCO2036</name>
    <name type="ORF">SC4G6.05c</name>
</gene>
<comment type="function">
    <text evidence="1">The alpha subunit is responsible for the aldol cleavage of indoleglycerol phosphate to indole and glyceraldehyde 3-phosphate.</text>
</comment>
<comment type="catalytic activity">
    <reaction evidence="1">
        <text>(1S,2R)-1-C-(indol-3-yl)glycerol 3-phosphate + L-serine = D-glyceraldehyde 3-phosphate + L-tryptophan + H2O</text>
        <dbReference type="Rhea" id="RHEA:10532"/>
        <dbReference type="ChEBI" id="CHEBI:15377"/>
        <dbReference type="ChEBI" id="CHEBI:33384"/>
        <dbReference type="ChEBI" id="CHEBI:57912"/>
        <dbReference type="ChEBI" id="CHEBI:58866"/>
        <dbReference type="ChEBI" id="CHEBI:59776"/>
        <dbReference type="EC" id="4.2.1.20"/>
    </reaction>
</comment>
<comment type="pathway">
    <text evidence="1">Amino-acid biosynthesis; L-tryptophan biosynthesis; L-tryptophan from chorismate: step 5/5.</text>
</comment>
<comment type="subunit">
    <text evidence="1">Tetramer of two alpha and two beta chains.</text>
</comment>
<comment type="similarity">
    <text evidence="1">Belongs to the TrpA family.</text>
</comment>
<accession>O68816</accession>
<dbReference type="EC" id="4.2.1.20" evidence="1"/>
<dbReference type="EMBL" id="AF054585">
    <property type="protein sequence ID" value="AAC63503.1"/>
    <property type="molecule type" value="Genomic_DNA"/>
</dbReference>
<dbReference type="EMBL" id="AL939111">
    <property type="protein sequence ID" value="CAB51428.1"/>
    <property type="molecule type" value="Genomic_DNA"/>
</dbReference>
<dbReference type="PIR" id="T35065">
    <property type="entry name" value="T35065"/>
</dbReference>
<dbReference type="RefSeq" id="NP_626296.1">
    <property type="nucleotide sequence ID" value="NC_003888.3"/>
</dbReference>
<dbReference type="RefSeq" id="WP_003976780.1">
    <property type="nucleotide sequence ID" value="NZ_VNID01000001.1"/>
</dbReference>
<dbReference type="SMR" id="O68816"/>
<dbReference type="FunCoup" id="O68816">
    <property type="interactions" value="243"/>
</dbReference>
<dbReference type="STRING" id="100226.gene:17759634"/>
<dbReference type="PaxDb" id="100226-SCO2036"/>
<dbReference type="GeneID" id="91386971"/>
<dbReference type="KEGG" id="sco:SCO2036"/>
<dbReference type="PATRIC" id="fig|100226.15.peg.2067"/>
<dbReference type="eggNOG" id="COG0159">
    <property type="taxonomic scope" value="Bacteria"/>
</dbReference>
<dbReference type="HOGENOM" id="CLU_016734_0_0_11"/>
<dbReference type="InParanoid" id="O68816"/>
<dbReference type="OrthoDB" id="9804578at2"/>
<dbReference type="PhylomeDB" id="O68816"/>
<dbReference type="UniPathway" id="UPA00035">
    <property type="reaction ID" value="UER00044"/>
</dbReference>
<dbReference type="Proteomes" id="UP000001973">
    <property type="component" value="Chromosome"/>
</dbReference>
<dbReference type="GO" id="GO:0005829">
    <property type="term" value="C:cytosol"/>
    <property type="evidence" value="ECO:0000318"/>
    <property type="project" value="GO_Central"/>
</dbReference>
<dbReference type="GO" id="GO:0004834">
    <property type="term" value="F:tryptophan synthase activity"/>
    <property type="evidence" value="ECO:0000318"/>
    <property type="project" value="GO_Central"/>
</dbReference>
<dbReference type="GO" id="GO:0000162">
    <property type="term" value="P:L-tryptophan biosynthetic process"/>
    <property type="evidence" value="ECO:0000318"/>
    <property type="project" value="GO_Central"/>
</dbReference>
<dbReference type="CDD" id="cd04724">
    <property type="entry name" value="Tryptophan_synthase_alpha"/>
    <property type="match status" value="1"/>
</dbReference>
<dbReference type="FunFam" id="3.20.20.70:FF:000037">
    <property type="entry name" value="Tryptophan synthase alpha chain"/>
    <property type="match status" value="1"/>
</dbReference>
<dbReference type="Gene3D" id="3.20.20.70">
    <property type="entry name" value="Aldolase class I"/>
    <property type="match status" value="1"/>
</dbReference>
<dbReference type="HAMAP" id="MF_00131">
    <property type="entry name" value="Trp_synth_alpha"/>
    <property type="match status" value="1"/>
</dbReference>
<dbReference type="InterPro" id="IPR013785">
    <property type="entry name" value="Aldolase_TIM"/>
</dbReference>
<dbReference type="InterPro" id="IPR011060">
    <property type="entry name" value="RibuloseP-bd_barrel"/>
</dbReference>
<dbReference type="InterPro" id="IPR018204">
    <property type="entry name" value="Trp_synthase_alpha_AS"/>
</dbReference>
<dbReference type="InterPro" id="IPR002028">
    <property type="entry name" value="Trp_synthase_suA"/>
</dbReference>
<dbReference type="NCBIfam" id="TIGR00262">
    <property type="entry name" value="trpA"/>
    <property type="match status" value="1"/>
</dbReference>
<dbReference type="PANTHER" id="PTHR43406:SF1">
    <property type="entry name" value="TRYPTOPHAN SYNTHASE ALPHA CHAIN, CHLOROPLASTIC"/>
    <property type="match status" value="1"/>
</dbReference>
<dbReference type="PANTHER" id="PTHR43406">
    <property type="entry name" value="TRYPTOPHAN SYNTHASE, ALPHA CHAIN"/>
    <property type="match status" value="1"/>
</dbReference>
<dbReference type="Pfam" id="PF00290">
    <property type="entry name" value="Trp_syntA"/>
    <property type="match status" value="1"/>
</dbReference>
<dbReference type="SUPFAM" id="SSF51366">
    <property type="entry name" value="Ribulose-phoshate binding barrel"/>
    <property type="match status" value="1"/>
</dbReference>
<dbReference type="PROSITE" id="PS00167">
    <property type="entry name" value="TRP_SYNTHASE_ALPHA"/>
    <property type="match status" value="1"/>
</dbReference>
<name>TRPA_STRCO</name>